<sequence length="44" mass="5082">MKRTFQPSVLKRARTHGFRARMATKNGRQVLARRRAKGRKSLSA</sequence>
<keyword id="KW-1185">Reference proteome</keyword>
<keyword id="KW-0687">Ribonucleoprotein</keyword>
<keyword id="KW-0689">Ribosomal protein</keyword>
<name>RL34_GLAP5</name>
<feature type="chain" id="PRO_1000134445" description="Large ribosomal subunit protein bL34">
    <location>
        <begin position="1"/>
        <end position="44"/>
    </location>
</feature>
<feature type="region of interest" description="Disordered" evidence="2">
    <location>
        <begin position="23"/>
        <end position="44"/>
    </location>
</feature>
<feature type="compositionally biased region" description="Basic residues" evidence="2">
    <location>
        <begin position="31"/>
        <end position="44"/>
    </location>
</feature>
<organism>
    <name type="scientific">Glaesserella parasuis serovar 5 (strain SH0165)</name>
    <name type="common">Haemophilus parasuis</name>
    <dbReference type="NCBI Taxonomy" id="557723"/>
    <lineage>
        <taxon>Bacteria</taxon>
        <taxon>Pseudomonadati</taxon>
        <taxon>Pseudomonadota</taxon>
        <taxon>Gammaproteobacteria</taxon>
        <taxon>Pasteurellales</taxon>
        <taxon>Pasteurellaceae</taxon>
        <taxon>Glaesserella</taxon>
    </lineage>
</organism>
<proteinExistence type="inferred from homology"/>
<evidence type="ECO:0000255" key="1">
    <source>
        <dbReference type="HAMAP-Rule" id="MF_00391"/>
    </source>
</evidence>
<evidence type="ECO:0000256" key="2">
    <source>
        <dbReference type="SAM" id="MobiDB-lite"/>
    </source>
</evidence>
<evidence type="ECO:0000305" key="3"/>
<reference key="1">
    <citation type="journal article" date="2009" name="J. Bacteriol.">
        <title>Complete genome sequence of Haemophilus parasuis SH0165.</title>
        <authorList>
            <person name="Yue M."/>
            <person name="Yang F."/>
            <person name="Yang J."/>
            <person name="Bei W."/>
            <person name="Cai X."/>
            <person name="Chen L."/>
            <person name="Dong J."/>
            <person name="Zhou R."/>
            <person name="Jin M."/>
            <person name="Jin Q."/>
            <person name="Chen H."/>
        </authorList>
    </citation>
    <scope>NUCLEOTIDE SEQUENCE [LARGE SCALE GENOMIC DNA]</scope>
    <source>
        <strain>SH0165</strain>
    </source>
</reference>
<protein>
    <recommendedName>
        <fullName evidence="1">Large ribosomal subunit protein bL34</fullName>
    </recommendedName>
    <alternativeName>
        <fullName evidence="3">50S ribosomal protein L34</fullName>
    </alternativeName>
</protein>
<accession>B8F7T1</accession>
<dbReference type="EMBL" id="CP001321">
    <property type="protein sequence ID" value="ACL33383.1"/>
    <property type="molecule type" value="Genomic_DNA"/>
</dbReference>
<dbReference type="RefSeq" id="WP_005599701.1">
    <property type="nucleotide sequence ID" value="NC_011852.1"/>
</dbReference>
<dbReference type="SMR" id="B8F7T1"/>
<dbReference type="STRING" id="557723.HAPS_1895"/>
<dbReference type="GeneID" id="92743426"/>
<dbReference type="KEGG" id="hap:HAPS_1895"/>
<dbReference type="HOGENOM" id="CLU_129938_2_0_6"/>
<dbReference type="Proteomes" id="UP000006743">
    <property type="component" value="Chromosome"/>
</dbReference>
<dbReference type="GO" id="GO:1990904">
    <property type="term" value="C:ribonucleoprotein complex"/>
    <property type="evidence" value="ECO:0007669"/>
    <property type="project" value="UniProtKB-KW"/>
</dbReference>
<dbReference type="GO" id="GO:0005840">
    <property type="term" value="C:ribosome"/>
    <property type="evidence" value="ECO:0007669"/>
    <property type="project" value="UniProtKB-KW"/>
</dbReference>
<dbReference type="GO" id="GO:0003735">
    <property type="term" value="F:structural constituent of ribosome"/>
    <property type="evidence" value="ECO:0007669"/>
    <property type="project" value="InterPro"/>
</dbReference>
<dbReference type="GO" id="GO:0006412">
    <property type="term" value="P:translation"/>
    <property type="evidence" value="ECO:0007669"/>
    <property type="project" value="UniProtKB-UniRule"/>
</dbReference>
<dbReference type="FunFam" id="1.10.287.3980:FF:000001">
    <property type="entry name" value="Mitochondrial ribosomal protein L34"/>
    <property type="match status" value="1"/>
</dbReference>
<dbReference type="Gene3D" id="1.10.287.3980">
    <property type="match status" value="1"/>
</dbReference>
<dbReference type="HAMAP" id="MF_00391">
    <property type="entry name" value="Ribosomal_bL34"/>
    <property type="match status" value="1"/>
</dbReference>
<dbReference type="InterPro" id="IPR000271">
    <property type="entry name" value="Ribosomal_bL34"/>
</dbReference>
<dbReference type="InterPro" id="IPR020939">
    <property type="entry name" value="Ribosomal_bL34_CS"/>
</dbReference>
<dbReference type="NCBIfam" id="TIGR01030">
    <property type="entry name" value="rpmH_bact"/>
    <property type="match status" value="1"/>
</dbReference>
<dbReference type="PANTHER" id="PTHR14503:SF4">
    <property type="entry name" value="LARGE RIBOSOMAL SUBUNIT PROTEIN BL34M"/>
    <property type="match status" value="1"/>
</dbReference>
<dbReference type="PANTHER" id="PTHR14503">
    <property type="entry name" value="MITOCHONDRIAL RIBOSOMAL PROTEIN 34 FAMILY MEMBER"/>
    <property type="match status" value="1"/>
</dbReference>
<dbReference type="Pfam" id="PF00468">
    <property type="entry name" value="Ribosomal_L34"/>
    <property type="match status" value="1"/>
</dbReference>
<dbReference type="PROSITE" id="PS00784">
    <property type="entry name" value="RIBOSOMAL_L34"/>
    <property type="match status" value="1"/>
</dbReference>
<gene>
    <name evidence="1" type="primary">rpmH</name>
    <name type="ordered locus">HAPS_1895</name>
</gene>
<comment type="similarity">
    <text evidence="1">Belongs to the bacterial ribosomal protein bL34 family.</text>
</comment>